<keyword id="KW-0256">Endoplasmic reticulum</keyword>
<keyword id="KW-0325">Glycoprotein</keyword>
<keyword id="KW-0333">Golgi apparatus</keyword>
<keyword id="KW-0472">Membrane</keyword>
<keyword id="KW-1185">Reference proteome</keyword>
<keyword id="KW-0732">Signal</keyword>
<keyword id="KW-0812">Transmembrane</keyword>
<keyword id="KW-1133">Transmembrane helix</keyword>
<sequence>MTERAAAAPRGPYGAWLCLLVALALEVVRVGSNQNTLDPIYLPVALELLDAPEHFRVQQVGHYPPANSSLGSRSETFLLMQPWPRAQPLLRASYPPFATQQVVPPRVTEPHRRPVPWDVRAVSVEAAVTPAEPYARVLFHLKGQDWPPGPGSLPCARLHATHPAGTAHQACRFQPSLGACVVELQFPSQWFSQSATTRAELAYTLEPAGEGPGGCGPGTEEEPKEQALPVGSVELHPEDPPQHQEVPLDEVVTLRAPDVPVRPGQLFTATLLLRHNFTASLLTLRIKVKKGLQVTAARPAQPTFWTAKLDRFKGSKHHTSLITCHRTGPAGPDSRPLELPEFLWVDFAVENSTGGGVAVTRPVTWQLEYPGQAPEAEKDKMVWEILFSERDIRALIPLAKAEELVNTAPLTGVPQRIPVRLVTVDSGGALEEVTEHIGCESANTQVLQVSEACDAVFVAGQESRGAKGVRVDFWWRRLRASLKLTVWAPLLPLRIELTDTTLEQIRGWRVPGPAEGQLEPEAAAEEVERRSRGCRLQYQRAGVRFLVPFAAHPLDGGRRLTHLLGPDWLLDVSHLVAAHAHVQDPRIATLEGGRILVGREPGVTSIEVRSPLSDSILGEQALAVTDDKVSVLDLRVQPVMGISLSLSRGVSHPGEVTATCWAQSALPAPKQEVALSLWLSFSDHTLAPAELYDRNDLGLSVSAEEPSAVVPAEEQRAQLGVVVSGVGAKGLPLHVALHPPEPCRRGRHRVPLASGTAWLGLPPLPTPAPALPSSPARTPPFTEASVEGKRQVAGDMGSHVGPGIRGKFERAEEEAGKEENEAKEEEEDEEEMVPAPQRVTDLELGMYALLGIFCLAFLIFLVNGVVFVLRYQRKEPPDSVTDPASPQPHNWVWLGTNQEELSRQLDRCSSSSPPKGEGGCPCESGAGGDTSTVAPSASESPAGSTSTLARKEAGGRRKRVEFVTFAPAPPAQEAPEEPVGAPAVQSILVAGEEDIRWVCEDMGLKDPEELRNYMERIRGSS</sequence>
<comment type="function">
    <text evidence="3 4">May play a role in embryonic and postnatal development of the brain. Increased resistance to cell death induced by serum starvation in cultured cells. Regulates cAMP-induced GFAP gene expression via STAT3 phosphorylation.</text>
</comment>
<comment type="subunit">
    <text evidence="3">Interacts with HSPA5/GRP78.</text>
</comment>
<comment type="subcellular location">
    <subcellularLocation>
        <location evidence="3">Golgi apparatus membrane</location>
        <topology evidence="3">Single-pass type I membrane protein</topology>
    </subcellularLocation>
    <subcellularLocation>
        <location evidence="3">Endoplasmic reticulum membrane</location>
        <topology evidence="3">Single-pass type I membrane protein</topology>
    </subcellularLocation>
</comment>
<comment type="tissue specificity">
    <text evidence="3">Expressed in the brain in neuronal cells of the hypothalamus, thalamus, cerebral cortex, amygdala, and cerebellum.</text>
</comment>
<comment type="developmental stage">
    <text evidence="3">Detected in the brain at 12 dpc with increasing level reaching a peak within 2 weeks after birth.</text>
</comment>
<comment type="similarity">
    <text evidence="5">Belongs to the TMEM132 family.</text>
</comment>
<protein>
    <recommendedName>
        <fullName>Transmembrane protein 132A</fullName>
    </recommendedName>
    <alternativeName>
        <fullName>GRP78-binding protein</fullName>
    </alternativeName>
    <alternativeName>
        <fullName>HSPA5-binding protein 1</fullName>
    </alternativeName>
</protein>
<name>T132A_RAT</name>
<dbReference type="EMBL" id="AY216677">
    <property type="protein sequence ID" value="AAO65155.1"/>
    <property type="molecule type" value="mRNA"/>
</dbReference>
<dbReference type="RefSeq" id="NP_821140.1">
    <property type="nucleotide sequence ID" value="NM_178021.1"/>
</dbReference>
<dbReference type="FunCoup" id="Q80WF4">
    <property type="interactions" value="1507"/>
</dbReference>
<dbReference type="STRING" id="10116.ENSRNOP00000037012"/>
<dbReference type="GlyCosmos" id="Q80WF4">
    <property type="glycosylation" value="1 site, No reported glycans"/>
</dbReference>
<dbReference type="GlyGen" id="Q80WF4">
    <property type="glycosylation" value="4 sites"/>
</dbReference>
<dbReference type="PhosphoSitePlus" id="Q80WF4"/>
<dbReference type="jPOST" id="Q80WF4"/>
<dbReference type="PaxDb" id="10116-ENSRNOP00000037012"/>
<dbReference type="GeneID" id="338474"/>
<dbReference type="KEGG" id="rno:338474"/>
<dbReference type="UCSC" id="RGD:727936">
    <property type="organism name" value="rat"/>
</dbReference>
<dbReference type="AGR" id="RGD:727936"/>
<dbReference type="CTD" id="54972"/>
<dbReference type="RGD" id="727936">
    <property type="gene designation" value="Tmem132a"/>
</dbReference>
<dbReference type="eggNOG" id="KOG4789">
    <property type="taxonomic scope" value="Eukaryota"/>
</dbReference>
<dbReference type="InParanoid" id="Q80WF4"/>
<dbReference type="PhylomeDB" id="Q80WF4"/>
<dbReference type="Reactome" id="R-RNO-381426">
    <property type="pathway name" value="Regulation of Insulin-like Growth Factor (IGF) transport and uptake by Insulin-like Growth Factor Binding Proteins (IGFBPs)"/>
</dbReference>
<dbReference type="Reactome" id="R-RNO-8957275">
    <property type="pathway name" value="Post-translational protein phosphorylation"/>
</dbReference>
<dbReference type="PRO" id="PR:Q80WF4"/>
<dbReference type="Proteomes" id="UP000002494">
    <property type="component" value="Unplaced"/>
</dbReference>
<dbReference type="GO" id="GO:0005783">
    <property type="term" value="C:endoplasmic reticulum"/>
    <property type="evidence" value="ECO:0000266"/>
    <property type="project" value="RGD"/>
</dbReference>
<dbReference type="GO" id="GO:0005789">
    <property type="term" value="C:endoplasmic reticulum membrane"/>
    <property type="evidence" value="ECO:0007669"/>
    <property type="project" value="UniProtKB-SubCell"/>
</dbReference>
<dbReference type="GO" id="GO:0000139">
    <property type="term" value="C:Golgi membrane"/>
    <property type="evidence" value="ECO:0007669"/>
    <property type="project" value="UniProtKB-SubCell"/>
</dbReference>
<dbReference type="GO" id="GO:0005886">
    <property type="term" value="C:plasma membrane"/>
    <property type="evidence" value="ECO:0000266"/>
    <property type="project" value="RGD"/>
</dbReference>
<dbReference type="GO" id="GO:0042803">
    <property type="term" value="F:protein homodimerization activity"/>
    <property type="evidence" value="ECO:0000266"/>
    <property type="project" value="RGD"/>
</dbReference>
<dbReference type="GO" id="GO:0070301">
    <property type="term" value="P:cellular response to hydrogen peroxide"/>
    <property type="evidence" value="ECO:0000270"/>
    <property type="project" value="RGD"/>
</dbReference>
<dbReference type="GO" id="GO:0043069">
    <property type="term" value="P:negative regulation of programmed cell death"/>
    <property type="evidence" value="ECO:0000315"/>
    <property type="project" value="RGD"/>
</dbReference>
<dbReference type="GO" id="GO:0042177">
    <property type="term" value="P:negative regulation of protein catabolic process"/>
    <property type="evidence" value="ECO:0000266"/>
    <property type="project" value="RGD"/>
</dbReference>
<dbReference type="GO" id="GO:0061357">
    <property type="term" value="P:positive regulation of Wnt protein secretion"/>
    <property type="evidence" value="ECO:0000266"/>
    <property type="project" value="RGD"/>
</dbReference>
<dbReference type="GO" id="GO:0030177">
    <property type="term" value="P:positive regulation of Wnt signaling pathway"/>
    <property type="evidence" value="ECO:0000266"/>
    <property type="project" value="RGD"/>
</dbReference>
<dbReference type="InterPro" id="IPR055422">
    <property type="entry name" value="Ig_TMEM132_2nd"/>
</dbReference>
<dbReference type="InterPro" id="IPR055423">
    <property type="entry name" value="Ig_TMEM132_5th"/>
</dbReference>
<dbReference type="InterPro" id="IPR055424">
    <property type="entry name" value="Ig_TMEM132_6th"/>
</dbReference>
<dbReference type="InterPro" id="IPR026307">
    <property type="entry name" value="TMEM132"/>
</dbReference>
<dbReference type="InterPro" id="IPR055421">
    <property type="entry name" value="TMEM132_3rd"/>
</dbReference>
<dbReference type="InterPro" id="IPR031436">
    <property type="entry name" value="TMEM132_C"/>
</dbReference>
<dbReference type="InterPro" id="IPR031437">
    <property type="entry name" value="TMEM132_M"/>
</dbReference>
<dbReference type="InterPro" id="IPR031435">
    <property type="entry name" value="TMEM132_N"/>
</dbReference>
<dbReference type="PANTHER" id="PTHR13388">
    <property type="entry name" value="DETONATOR, ISOFORM E"/>
    <property type="match status" value="1"/>
</dbReference>
<dbReference type="PANTHER" id="PTHR13388:SF9">
    <property type="entry name" value="TRANSMEMBRANE PROTEIN 132A"/>
    <property type="match status" value="1"/>
</dbReference>
<dbReference type="Pfam" id="PF23481">
    <property type="entry name" value="Ig_TMEM132_2nd"/>
    <property type="match status" value="1"/>
</dbReference>
<dbReference type="Pfam" id="PF16070">
    <property type="entry name" value="Ig_TMEM132_4th"/>
    <property type="match status" value="1"/>
</dbReference>
<dbReference type="Pfam" id="PF23486">
    <property type="entry name" value="Ig_TMEM132_5th"/>
    <property type="match status" value="1"/>
</dbReference>
<dbReference type="Pfam" id="PF23487">
    <property type="entry name" value="Ig_TMEM132_6th"/>
    <property type="match status" value="1"/>
</dbReference>
<dbReference type="Pfam" id="PF23039">
    <property type="entry name" value="TMEM132_3rd"/>
    <property type="match status" value="1"/>
</dbReference>
<dbReference type="Pfam" id="PF15706">
    <property type="entry name" value="TMEM132_C"/>
    <property type="match status" value="1"/>
</dbReference>
<dbReference type="Pfam" id="PF15705">
    <property type="entry name" value="TMEM132_N"/>
    <property type="match status" value="1"/>
</dbReference>
<proteinExistence type="evidence at protein level"/>
<organism>
    <name type="scientific">Rattus norvegicus</name>
    <name type="common">Rat</name>
    <dbReference type="NCBI Taxonomy" id="10116"/>
    <lineage>
        <taxon>Eukaryota</taxon>
        <taxon>Metazoa</taxon>
        <taxon>Chordata</taxon>
        <taxon>Craniata</taxon>
        <taxon>Vertebrata</taxon>
        <taxon>Euteleostomi</taxon>
        <taxon>Mammalia</taxon>
        <taxon>Eutheria</taxon>
        <taxon>Euarchontoglires</taxon>
        <taxon>Glires</taxon>
        <taxon>Rodentia</taxon>
        <taxon>Myomorpha</taxon>
        <taxon>Muroidea</taxon>
        <taxon>Muridae</taxon>
        <taxon>Murinae</taxon>
        <taxon>Rattus</taxon>
    </lineage>
</organism>
<reference key="1">
    <citation type="journal article" date="2003" name="J. Biol. Chem.">
        <title>Cloning and characterization of a novel GRP78-binding protein in the rat brain.</title>
        <authorList>
            <person name="Oh-hashi K."/>
            <person name="Naruse Y."/>
            <person name="Amaya F."/>
            <person name="Shimosato G."/>
            <person name="Tanaka M."/>
        </authorList>
    </citation>
    <scope>NUCLEOTIDE SEQUENCE [MRNA]</scope>
    <scope>FUNCTION</scope>
    <scope>SUBCELLULAR LOCATION</scope>
    <scope>TISSUE SPECIFICITY</scope>
    <scope>DEVELOPMENTAL STAGE</scope>
    <scope>INTERACTION WITH HSPA5</scope>
    <scope>REGION</scope>
    <source>
        <strain>Sprague-Dawley</strain>
    </source>
</reference>
<reference key="2">
    <citation type="journal article" date="2006" name="FEBS Lett.">
        <title>GRP78-binding protein regulates cAMP-induced glial fibrillary acidic protein expression in rat C6 glioblastoma cells.</title>
        <authorList>
            <person name="Oh-hashi K."/>
            <person name="Hirata Y."/>
            <person name="Koga H."/>
            <person name="Kiuchi K."/>
        </authorList>
    </citation>
    <scope>FUNCTION</scope>
</reference>
<gene>
    <name type="primary">Tmem132a</name>
    <name type="synonym">Gbp</name>
    <name type="synonym">Hspa5bp1</name>
</gene>
<feature type="signal peptide" evidence="1">
    <location>
        <begin position="1"/>
        <end position="32"/>
    </location>
</feature>
<feature type="chain" id="PRO_0000287098" description="Transmembrane protein 132A">
    <location>
        <begin position="33"/>
        <end position="1021"/>
    </location>
</feature>
<feature type="topological domain" description="Extracellular" evidence="1">
    <location>
        <begin position="33"/>
        <end position="848"/>
    </location>
</feature>
<feature type="transmembrane region" description="Helical" evidence="1">
    <location>
        <begin position="849"/>
        <end position="869"/>
    </location>
</feature>
<feature type="topological domain" description="Cytoplasmic" evidence="1">
    <location>
        <begin position="870"/>
        <end position="1021"/>
    </location>
</feature>
<feature type="region of interest" description="Disordered" evidence="2">
    <location>
        <begin position="207"/>
        <end position="226"/>
    </location>
</feature>
<feature type="region of interest" description="Binds to HSPA5/GRP78">
    <location>
        <begin position="606"/>
        <end position="913"/>
    </location>
</feature>
<feature type="region of interest" description="Confers cellular localization similar to full-length form">
    <location>
        <begin position="666"/>
        <end position="1021"/>
    </location>
</feature>
<feature type="region of interest" description="Disordered" evidence="2">
    <location>
        <begin position="793"/>
        <end position="835"/>
    </location>
</feature>
<feature type="region of interest" description="Disordered" evidence="2">
    <location>
        <begin position="903"/>
        <end position="955"/>
    </location>
</feature>
<feature type="compositionally biased region" description="Basic and acidic residues" evidence="2">
    <location>
        <begin position="806"/>
        <end position="820"/>
    </location>
</feature>
<feature type="compositionally biased region" description="Acidic residues" evidence="2">
    <location>
        <begin position="821"/>
        <end position="832"/>
    </location>
</feature>
<feature type="compositionally biased region" description="Polar residues" evidence="2">
    <location>
        <begin position="929"/>
        <end position="948"/>
    </location>
</feature>
<feature type="glycosylation site" description="N-linked (GlcNAc...) asparagine" evidence="1">
    <location>
        <position position="276"/>
    </location>
</feature>
<evidence type="ECO:0000255" key="1"/>
<evidence type="ECO:0000256" key="2">
    <source>
        <dbReference type="SAM" id="MobiDB-lite"/>
    </source>
</evidence>
<evidence type="ECO:0000269" key="3">
    <source>
    </source>
</evidence>
<evidence type="ECO:0000269" key="4">
    <source>
    </source>
</evidence>
<evidence type="ECO:0000305" key="5"/>
<accession>Q80WF4</accession>